<keyword id="KW-0025">Alternative splicing</keyword>
<keyword id="KW-0106">Calcium</keyword>
<keyword id="KW-1015">Disulfide bond</keyword>
<keyword id="KW-0245">EGF-like domain</keyword>
<keyword id="KW-0325">Glycoprotein</keyword>
<keyword id="KW-0472">Membrane</keyword>
<keyword id="KW-1267">Proteomics identification</keyword>
<keyword id="KW-1185">Reference proteome</keyword>
<keyword id="KW-0677">Repeat</keyword>
<keyword id="KW-0732">Signal</keyword>
<keyword id="KW-0812">Transmembrane</keyword>
<keyword id="KW-1133">Transmembrane helix</keyword>
<gene>
    <name type="primary">DLK2</name>
    <name type="synonym">EGFL9</name>
    <name type="ORF">UNQ2903/PRO28633</name>
</gene>
<accession>Q6UY11</accession>
<accession>B3KNZ7</accession>
<accession>Q5T3T8</accession>
<accession>Q9BQ54</accession>
<protein>
    <recommendedName>
        <fullName>Protein delta homolog 2</fullName>
        <shortName>DLK-2</shortName>
    </recommendedName>
    <alternativeName>
        <fullName>Epidermal growth factor-like protein 9</fullName>
        <shortName>EGF-like protein 9</shortName>
    </alternativeName>
</protein>
<reference key="1">
    <citation type="journal article" date="2003" name="Genome Res.">
        <title>The secreted protein discovery initiative (SPDI), a large-scale effort to identify novel human secreted and transmembrane proteins: a bioinformatics assessment.</title>
        <authorList>
            <person name="Clark H.F."/>
            <person name="Gurney A.L."/>
            <person name="Abaya E."/>
            <person name="Baker K."/>
            <person name="Baldwin D.T."/>
            <person name="Brush J."/>
            <person name="Chen J."/>
            <person name="Chow B."/>
            <person name="Chui C."/>
            <person name="Crowley C."/>
            <person name="Currell B."/>
            <person name="Deuel B."/>
            <person name="Dowd P."/>
            <person name="Eaton D."/>
            <person name="Foster J.S."/>
            <person name="Grimaldi C."/>
            <person name="Gu Q."/>
            <person name="Hass P.E."/>
            <person name="Heldens S."/>
            <person name="Huang A."/>
            <person name="Kim H.S."/>
            <person name="Klimowski L."/>
            <person name="Jin Y."/>
            <person name="Johnson S."/>
            <person name="Lee J."/>
            <person name="Lewis L."/>
            <person name="Liao D."/>
            <person name="Mark M.R."/>
            <person name="Robbie E."/>
            <person name="Sanchez C."/>
            <person name="Schoenfeld J."/>
            <person name="Seshagiri S."/>
            <person name="Simmons L."/>
            <person name="Singh J."/>
            <person name="Smith V."/>
            <person name="Stinson J."/>
            <person name="Vagts A."/>
            <person name="Vandlen R.L."/>
            <person name="Watanabe C."/>
            <person name="Wieand D."/>
            <person name="Woods K."/>
            <person name="Xie M.-H."/>
            <person name="Yansura D.G."/>
            <person name="Yi S."/>
            <person name="Yu G."/>
            <person name="Yuan J."/>
            <person name="Zhang M."/>
            <person name="Zhang Z."/>
            <person name="Goddard A.D."/>
            <person name="Wood W.I."/>
            <person name="Godowski P.J."/>
            <person name="Gray A.M."/>
        </authorList>
    </citation>
    <scope>NUCLEOTIDE SEQUENCE [LARGE SCALE MRNA] (ISOFORM 1)</scope>
</reference>
<reference key="2">
    <citation type="journal article" date="2004" name="Nat. Genet.">
        <title>Complete sequencing and characterization of 21,243 full-length human cDNAs.</title>
        <authorList>
            <person name="Ota T."/>
            <person name="Suzuki Y."/>
            <person name="Nishikawa T."/>
            <person name="Otsuki T."/>
            <person name="Sugiyama T."/>
            <person name="Irie R."/>
            <person name="Wakamatsu A."/>
            <person name="Hayashi K."/>
            <person name="Sato H."/>
            <person name="Nagai K."/>
            <person name="Kimura K."/>
            <person name="Makita H."/>
            <person name="Sekine M."/>
            <person name="Obayashi M."/>
            <person name="Nishi T."/>
            <person name="Shibahara T."/>
            <person name="Tanaka T."/>
            <person name="Ishii S."/>
            <person name="Yamamoto J."/>
            <person name="Saito K."/>
            <person name="Kawai Y."/>
            <person name="Isono Y."/>
            <person name="Nakamura Y."/>
            <person name="Nagahari K."/>
            <person name="Murakami K."/>
            <person name="Yasuda T."/>
            <person name="Iwayanagi T."/>
            <person name="Wagatsuma M."/>
            <person name="Shiratori A."/>
            <person name="Sudo H."/>
            <person name="Hosoiri T."/>
            <person name="Kaku Y."/>
            <person name="Kodaira H."/>
            <person name="Kondo H."/>
            <person name="Sugawara M."/>
            <person name="Takahashi M."/>
            <person name="Kanda K."/>
            <person name="Yokoi T."/>
            <person name="Furuya T."/>
            <person name="Kikkawa E."/>
            <person name="Omura Y."/>
            <person name="Abe K."/>
            <person name="Kamihara K."/>
            <person name="Katsuta N."/>
            <person name="Sato K."/>
            <person name="Tanikawa M."/>
            <person name="Yamazaki M."/>
            <person name="Ninomiya K."/>
            <person name="Ishibashi T."/>
            <person name="Yamashita H."/>
            <person name="Murakawa K."/>
            <person name="Fujimori K."/>
            <person name="Tanai H."/>
            <person name="Kimata M."/>
            <person name="Watanabe M."/>
            <person name="Hiraoka S."/>
            <person name="Chiba Y."/>
            <person name="Ishida S."/>
            <person name="Ono Y."/>
            <person name="Takiguchi S."/>
            <person name="Watanabe S."/>
            <person name="Yosida M."/>
            <person name="Hotuta T."/>
            <person name="Kusano J."/>
            <person name="Kanehori K."/>
            <person name="Takahashi-Fujii A."/>
            <person name="Hara H."/>
            <person name="Tanase T.-O."/>
            <person name="Nomura Y."/>
            <person name="Togiya S."/>
            <person name="Komai F."/>
            <person name="Hara R."/>
            <person name="Takeuchi K."/>
            <person name="Arita M."/>
            <person name="Imose N."/>
            <person name="Musashino K."/>
            <person name="Yuuki H."/>
            <person name="Oshima A."/>
            <person name="Sasaki N."/>
            <person name="Aotsuka S."/>
            <person name="Yoshikawa Y."/>
            <person name="Matsunawa H."/>
            <person name="Ichihara T."/>
            <person name="Shiohata N."/>
            <person name="Sano S."/>
            <person name="Moriya S."/>
            <person name="Momiyama H."/>
            <person name="Satoh N."/>
            <person name="Takami S."/>
            <person name="Terashima Y."/>
            <person name="Suzuki O."/>
            <person name="Nakagawa S."/>
            <person name="Senoh A."/>
            <person name="Mizoguchi H."/>
            <person name="Goto Y."/>
            <person name="Shimizu F."/>
            <person name="Wakebe H."/>
            <person name="Hishigaki H."/>
            <person name="Watanabe T."/>
            <person name="Sugiyama A."/>
            <person name="Takemoto M."/>
            <person name="Kawakami B."/>
            <person name="Yamazaki M."/>
            <person name="Watanabe K."/>
            <person name="Kumagai A."/>
            <person name="Itakura S."/>
            <person name="Fukuzumi Y."/>
            <person name="Fujimori Y."/>
            <person name="Komiyama M."/>
            <person name="Tashiro H."/>
            <person name="Tanigami A."/>
            <person name="Fujiwara T."/>
            <person name="Ono T."/>
            <person name="Yamada K."/>
            <person name="Fujii Y."/>
            <person name="Ozaki K."/>
            <person name="Hirao M."/>
            <person name="Ohmori Y."/>
            <person name="Kawabata A."/>
            <person name="Hikiji T."/>
            <person name="Kobatake N."/>
            <person name="Inagaki H."/>
            <person name="Ikema Y."/>
            <person name="Okamoto S."/>
            <person name="Okitani R."/>
            <person name="Kawakami T."/>
            <person name="Noguchi S."/>
            <person name="Itoh T."/>
            <person name="Shigeta K."/>
            <person name="Senba T."/>
            <person name="Matsumura K."/>
            <person name="Nakajima Y."/>
            <person name="Mizuno T."/>
            <person name="Morinaga M."/>
            <person name="Sasaki M."/>
            <person name="Togashi T."/>
            <person name="Oyama M."/>
            <person name="Hata H."/>
            <person name="Watanabe M."/>
            <person name="Komatsu T."/>
            <person name="Mizushima-Sugano J."/>
            <person name="Satoh T."/>
            <person name="Shirai Y."/>
            <person name="Takahashi Y."/>
            <person name="Nakagawa K."/>
            <person name="Okumura K."/>
            <person name="Nagase T."/>
            <person name="Nomura N."/>
            <person name="Kikuchi H."/>
            <person name="Masuho Y."/>
            <person name="Yamashita R."/>
            <person name="Nakai K."/>
            <person name="Yada T."/>
            <person name="Nakamura Y."/>
            <person name="Ohara O."/>
            <person name="Isogai T."/>
            <person name="Sugano S."/>
        </authorList>
    </citation>
    <scope>NUCLEOTIDE SEQUENCE [LARGE SCALE MRNA] (ISOFORM 1)</scope>
    <source>
        <tissue>Brain</tissue>
    </source>
</reference>
<reference key="3">
    <citation type="journal article" date="2003" name="Nature">
        <title>The DNA sequence and analysis of human chromosome 6.</title>
        <authorList>
            <person name="Mungall A.J."/>
            <person name="Palmer S.A."/>
            <person name="Sims S.K."/>
            <person name="Edwards C.A."/>
            <person name="Ashurst J.L."/>
            <person name="Wilming L."/>
            <person name="Jones M.C."/>
            <person name="Horton R."/>
            <person name="Hunt S.E."/>
            <person name="Scott C.E."/>
            <person name="Gilbert J.G.R."/>
            <person name="Clamp M.E."/>
            <person name="Bethel G."/>
            <person name="Milne S."/>
            <person name="Ainscough R."/>
            <person name="Almeida J.P."/>
            <person name="Ambrose K.D."/>
            <person name="Andrews T.D."/>
            <person name="Ashwell R.I.S."/>
            <person name="Babbage A.K."/>
            <person name="Bagguley C.L."/>
            <person name="Bailey J."/>
            <person name="Banerjee R."/>
            <person name="Barker D.J."/>
            <person name="Barlow K.F."/>
            <person name="Bates K."/>
            <person name="Beare D.M."/>
            <person name="Beasley H."/>
            <person name="Beasley O."/>
            <person name="Bird C.P."/>
            <person name="Blakey S.E."/>
            <person name="Bray-Allen S."/>
            <person name="Brook J."/>
            <person name="Brown A.J."/>
            <person name="Brown J.Y."/>
            <person name="Burford D.C."/>
            <person name="Burrill W."/>
            <person name="Burton J."/>
            <person name="Carder C."/>
            <person name="Carter N.P."/>
            <person name="Chapman J.C."/>
            <person name="Clark S.Y."/>
            <person name="Clark G."/>
            <person name="Clee C.M."/>
            <person name="Clegg S."/>
            <person name="Cobley V."/>
            <person name="Collier R.E."/>
            <person name="Collins J.E."/>
            <person name="Colman L.K."/>
            <person name="Corby N.R."/>
            <person name="Coville G.J."/>
            <person name="Culley K.M."/>
            <person name="Dhami P."/>
            <person name="Davies J."/>
            <person name="Dunn M."/>
            <person name="Earthrowl M.E."/>
            <person name="Ellington A.E."/>
            <person name="Evans K.A."/>
            <person name="Faulkner L."/>
            <person name="Francis M.D."/>
            <person name="Frankish A."/>
            <person name="Frankland J."/>
            <person name="French L."/>
            <person name="Garner P."/>
            <person name="Garnett J."/>
            <person name="Ghori M.J."/>
            <person name="Gilby L.M."/>
            <person name="Gillson C.J."/>
            <person name="Glithero R.J."/>
            <person name="Grafham D.V."/>
            <person name="Grant M."/>
            <person name="Gribble S."/>
            <person name="Griffiths C."/>
            <person name="Griffiths M.N.D."/>
            <person name="Hall R."/>
            <person name="Halls K.S."/>
            <person name="Hammond S."/>
            <person name="Harley J.L."/>
            <person name="Hart E.A."/>
            <person name="Heath P.D."/>
            <person name="Heathcott R."/>
            <person name="Holmes S.J."/>
            <person name="Howden P.J."/>
            <person name="Howe K.L."/>
            <person name="Howell G.R."/>
            <person name="Huckle E."/>
            <person name="Humphray S.J."/>
            <person name="Humphries M.D."/>
            <person name="Hunt A.R."/>
            <person name="Johnson C.M."/>
            <person name="Joy A.A."/>
            <person name="Kay M."/>
            <person name="Keenan S.J."/>
            <person name="Kimberley A.M."/>
            <person name="King A."/>
            <person name="Laird G.K."/>
            <person name="Langford C."/>
            <person name="Lawlor S."/>
            <person name="Leongamornlert D.A."/>
            <person name="Leversha M."/>
            <person name="Lloyd C.R."/>
            <person name="Lloyd D.M."/>
            <person name="Loveland J.E."/>
            <person name="Lovell J."/>
            <person name="Martin S."/>
            <person name="Mashreghi-Mohammadi M."/>
            <person name="Maslen G.L."/>
            <person name="Matthews L."/>
            <person name="McCann O.T."/>
            <person name="McLaren S.J."/>
            <person name="McLay K."/>
            <person name="McMurray A."/>
            <person name="Moore M.J.F."/>
            <person name="Mullikin J.C."/>
            <person name="Niblett D."/>
            <person name="Nickerson T."/>
            <person name="Novik K.L."/>
            <person name="Oliver K."/>
            <person name="Overton-Larty E.K."/>
            <person name="Parker A."/>
            <person name="Patel R."/>
            <person name="Pearce A.V."/>
            <person name="Peck A.I."/>
            <person name="Phillimore B.J.C.T."/>
            <person name="Phillips S."/>
            <person name="Plumb R.W."/>
            <person name="Porter K.M."/>
            <person name="Ramsey Y."/>
            <person name="Ranby S.A."/>
            <person name="Rice C.M."/>
            <person name="Ross M.T."/>
            <person name="Searle S.M."/>
            <person name="Sehra H.K."/>
            <person name="Sheridan E."/>
            <person name="Skuce C.D."/>
            <person name="Smith S."/>
            <person name="Smith M."/>
            <person name="Spraggon L."/>
            <person name="Squares S.L."/>
            <person name="Steward C.A."/>
            <person name="Sycamore N."/>
            <person name="Tamlyn-Hall G."/>
            <person name="Tester J."/>
            <person name="Theaker A.J."/>
            <person name="Thomas D.W."/>
            <person name="Thorpe A."/>
            <person name="Tracey A."/>
            <person name="Tromans A."/>
            <person name="Tubby B."/>
            <person name="Wall M."/>
            <person name="Wallis J.M."/>
            <person name="West A.P."/>
            <person name="White S.S."/>
            <person name="Whitehead S.L."/>
            <person name="Whittaker H."/>
            <person name="Wild A."/>
            <person name="Willey D.J."/>
            <person name="Wilmer T.E."/>
            <person name="Wood J.M."/>
            <person name="Wray P.W."/>
            <person name="Wyatt J.C."/>
            <person name="Young L."/>
            <person name="Younger R.M."/>
            <person name="Bentley D.R."/>
            <person name="Coulson A."/>
            <person name="Durbin R.M."/>
            <person name="Hubbard T."/>
            <person name="Sulston J.E."/>
            <person name="Dunham I."/>
            <person name="Rogers J."/>
            <person name="Beck S."/>
        </authorList>
    </citation>
    <scope>NUCLEOTIDE SEQUENCE [LARGE SCALE GENOMIC DNA]</scope>
</reference>
<reference key="4">
    <citation type="submission" date="2005-07" db="EMBL/GenBank/DDBJ databases">
        <authorList>
            <person name="Mural R.J."/>
            <person name="Istrail S."/>
            <person name="Sutton G.G."/>
            <person name="Florea L."/>
            <person name="Halpern A.L."/>
            <person name="Mobarry C.M."/>
            <person name="Lippert R."/>
            <person name="Walenz B."/>
            <person name="Shatkay H."/>
            <person name="Dew I."/>
            <person name="Miller J.R."/>
            <person name="Flanigan M.J."/>
            <person name="Edwards N.J."/>
            <person name="Bolanos R."/>
            <person name="Fasulo D."/>
            <person name="Halldorsson B.V."/>
            <person name="Hannenhalli S."/>
            <person name="Turner R."/>
            <person name="Yooseph S."/>
            <person name="Lu F."/>
            <person name="Nusskern D.R."/>
            <person name="Shue B.C."/>
            <person name="Zheng X.H."/>
            <person name="Zhong F."/>
            <person name="Delcher A.L."/>
            <person name="Huson D.H."/>
            <person name="Kravitz S.A."/>
            <person name="Mouchard L."/>
            <person name="Reinert K."/>
            <person name="Remington K.A."/>
            <person name="Clark A.G."/>
            <person name="Waterman M.S."/>
            <person name="Eichler E.E."/>
            <person name="Adams M.D."/>
            <person name="Hunkapiller M.W."/>
            <person name="Myers E.W."/>
            <person name="Venter J.C."/>
        </authorList>
    </citation>
    <scope>NUCLEOTIDE SEQUENCE [LARGE SCALE GENOMIC DNA]</scope>
</reference>
<reference key="5">
    <citation type="journal article" date="2004" name="Genome Res.">
        <title>The status, quality, and expansion of the NIH full-length cDNA project: the Mammalian Gene Collection (MGC).</title>
        <authorList>
            <consortium name="The MGC Project Team"/>
        </authorList>
    </citation>
    <scope>NUCLEOTIDE SEQUENCE [LARGE SCALE MRNA] (ISOFORMS 1 AND 2)</scope>
    <source>
        <tissue>Eye</tissue>
    </source>
</reference>
<dbReference type="EMBL" id="AY358126">
    <property type="protein sequence ID" value="AAQ88493.1"/>
    <property type="molecule type" value="mRNA"/>
</dbReference>
<dbReference type="EMBL" id="AK055380">
    <property type="protein sequence ID" value="BAG51509.1"/>
    <property type="molecule type" value="mRNA"/>
</dbReference>
<dbReference type="EMBL" id="AL359813">
    <property type="status" value="NOT_ANNOTATED_CDS"/>
    <property type="molecule type" value="Genomic_DNA"/>
</dbReference>
<dbReference type="EMBL" id="CH471081">
    <property type="protein sequence ID" value="EAX04186.1"/>
    <property type="molecule type" value="Genomic_DNA"/>
</dbReference>
<dbReference type="EMBL" id="BC000230">
    <property type="protein sequence ID" value="AAH00230.1"/>
    <property type="molecule type" value="mRNA"/>
</dbReference>
<dbReference type="EMBL" id="BC006425">
    <property type="protein sequence ID" value="AAH06425.1"/>
    <property type="molecule type" value="mRNA"/>
</dbReference>
<dbReference type="EMBL" id="BC110320">
    <property type="protein sequence ID" value="AAI10321.1"/>
    <property type="molecule type" value="mRNA"/>
</dbReference>
<dbReference type="CCDS" id="CCDS4897.1">
    <molecule id="Q6UY11-1"/>
</dbReference>
<dbReference type="RefSeq" id="NP_001273584.1">
    <property type="nucleotide sequence ID" value="NM_001286655.1"/>
</dbReference>
<dbReference type="RefSeq" id="NP_001273585.1">
    <property type="nucleotide sequence ID" value="NM_001286656.1"/>
</dbReference>
<dbReference type="RefSeq" id="NP_076421.2">
    <molecule id="Q6UY11-1"/>
    <property type="nucleotide sequence ID" value="NM_023932.3"/>
</dbReference>
<dbReference type="RefSeq" id="NP_996262.1">
    <molecule id="Q6UY11-1"/>
    <property type="nucleotide sequence ID" value="NM_206539.2"/>
</dbReference>
<dbReference type="SMR" id="Q6UY11"/>
<dbReference type="BioGRID" id="122438">
    <property type="interactions" value="35"/>
</dbReference>
<dbReference type="FunCoup" id="Q6UY11">
    <property type="interactions" value="26"/>
</dbReference>
<dbReference type="IntAct" id="Q6UY11">
    <property type="interactions" value="38"/>
</dbReference>
<dbReference type="MINT" id="Q6UY11"/>
<dbReference type="STRING" id="9606.ENSP00000349893"/>
<dbReference type="GlyCosmos" id="Q6UY11">
    <property type="glycosylation" value="1 site, No reported glycans"/>
</dbReference>
<dbReference type="GlyGen" id="Q6UY11">
    <property type="glycosylation" value="2 sites"/>
</dbReference>
<dbReference type="iPTMnet" id="Q6UY11"/>
<dbReference type="PhosphoSitePlus" id="Q6UY11"/>
<dbReference type="BioMuta" id="DLK2"/>
<dbReference type="DMDM" id="55976806"/>
<dbReference type="MassIVE" id="Q6UY11"/>
<dbReference type="PaxDb" id="9606-ENSP00000349893"/>
<dbReference type="PeptideAtlas" id="Q6UY11"/>
<dbReference type="ProteomicsDB" id="67690">
    <molecule id="Q6UY11-1"/>
</dbReference>
<dbReference type="ProteomicsDB" id="67691">
    <molecule id="Q6UY11-2"/>
</dbReference>
<dbReference type="Antibodypedia" id="30417">
    <property type="antibodies" value="115 antibodies from 24 providers"/>
</dbReference>
<dbReference type="DNASU" id="65989"/>
<dbReference type="Ensembl" id="ENST00000357338.3">
    <molecule id="Q6UY11-1"/>
    <property type="protein sequence ID" value="ENSP00000349893.3"/>
    <property type="gene ID" value="ENSG00000171462.15"/>
</dbReference>
<dbReference type="Ensembl" id="ENST00000372488.8">
    <molecule id="Q6UY11-1"/>
    <property type="protein sequence ID" value="ENSP00000361566.3"/>
    <property type="gene ID" value="ENSG00000171462.15"/>
</dbReference>
<dbReference type="GeneID" id="65989"/>
<dbReference type="KEGG" id="hsa:65989"/>
<dbReference type="MANE-Select" id="ENST00000372488.8">
    <property type="protein sequence ID" value="ENSP00000361566.3"/>
    <property type="RefSeq nucleotide sequence ID" value="NM_023932.4"/>
    <property type="RefSeq protein sequence ID" value="NP_076421.2"/>
</dbReference>
<dbReference type="UCSC" id="uc003ova.5">
    <molecule id="Q6UY11-1"/>
    <property type="organism name" value="human"/>
</dbReference>
<dbReference type="AGR" id="HGNC:21113"/>
<dbReference type="CTD" id="65989"/>
<dbReference type="DisGeNET" id="65989"/>
<dbReference type="GeneCards" id="DLK2"/>
<dbReference type="HGNC" id="HGNC:21113">
    <property type="gene designation" value="DLK2"/>
</dbReference>
<dbReference type="HPA" id="ENSG00000171462">
    <property type="expression patterns" value="Tissue enhanced (esophagus, prostate, skin)"/>
</dbReference>
<dbReference type="neXtProt" id="NX_Q6UY11"/>
<dbReference type="OpenTargets" id="ENSG00000171462"/>
<dbReference type="PharmGKB" id="PA162383762"/>
<dbReference type="VEuPathDB" id="HostDB:ENSG00000171462"/>
<dbReference type="eggNOG" id="KOG1217">
    <property type="taxonomic scope" value="Eukaryota"/>
</dbReference>
<dbReference type="GeneTree" id="ENSGT00940000160761"/>
<dbReference type="InParanoid" id="Q6UY11"/>
<dbReference type="OMA" id="SVPEPTW"/>
<dbReference type="OrthoDB" id="430340at2759"/>
<dbReference type="PAN-GO" id="Q6UY11">
    <property type="GO annotations" value="1 GO annotation based on evolutionary models"/>
</dbReference>
<dbReference type="PhylomeDB" id="Q6UY11"/>
<dbReference type="TreeFam" id="TF351835"/>
<dbReference type="PathwayCommons" id="Q6UY11"/>
<dbReference type="SignaLink" id="Q6UY11"/>
<dbReference type="SIGNOR" id="Q6UY11"/>
<dbReference type="BioGRID-ORCS" id="65989">
    <property type="hits" value="10 hits in 1146 CRISPR screens"/>
</dbReference>
<dbReference type="GenomeRNAi" id="65989"/>
<dbReference type="Pharos" id="Q6UY11">
    <property type="development level" value="Tbio"/>
</dbReference>
<dbReference type="PRO" id="PR:Q6UY11"/>
<dbReference type="Proteomes" id="UP000005640">
    <property type="component" value="Chromosome 6"/>
</dbReference>
<dbReference type="RNAct" id="Q6UY11">
    <property type="molecule type" value="protein"/>
</dbReference>
<dbReference type="Bgee" id="ENSG00000171462">
    <property type="expression patterns" value="Expressed in primordial germ cell in gonad and 125 other cell types or tissues"/>
</dbReference>
<dbReference type="ExpressionAtlas" id="Q6UY11">
    <property type="expression patterns" value="baseline and differential"/>
</dbReference>
<dbReference type="GO" id="GO:0016020">
    <property type="term" value="C:membrane"/>
    <property type="evidence" value="ECO:0007669"/>
    <property type="project" value="UniProtKB-SubCell"/>
</dbReference>
<dbReference type="GO" id="GO:0005509">
    <property type="term" value="F:calcium ion binding"/>
    <property type="evidence" value="ECO:0007669"/>
    <property type="project" value="InterPro"/>
</dbReference>
<dbReference type="GO" id="GO:0042802">
    <property type="term" value="F:identical protein binding"/>
    <property type="evidence" value="ECO:0007669"/>
    <property type="project" value="Ensembl"/>
</dbReference>
<dbReference type="GO" id="GO:0005112">
    <property type="term" value="F:Notch binding"/>
    <property type="evidence" value="ECO:0000318"/>
    <property type="project" value="GO_Central"/>
</dbReference>
<dbReference type="GO" id="GO:0045746">
    <property type="term" value="P:negative regulation of Notch signaling pathway"/>
    <property type="evidence" value="ECO:0000314"/>
    <property type="project" value="HGNC"/>
</dbReference>
<dbReference type="GO" id="GO:0045598">
    <property type="term" value="P:regulation of fat cell differentiation"/>
    <property type="evidence" value="ECO:0007669"/>
    <property type="project" value="Ensembl"/>
</dbReference>
<dbReference type="CDD" id="cd00054">
    <property type="entry name" value="EGF_CA"/>
    <property type="match status" value="4"/>
</dbReference>
<dbReference type="FunFam" id="2.10.25.10:FF:000018">
    <property type="entry name" value="Delta-like 1"/>
    <property type="match status" value="1"/>
</dbReference>
<dbReference type="FunFam" id="2.10.25.10:FF:000263">
    <property type="entry name" value="Protein delta homolog 2"/>
    <property type="match status" value="1"/>
</dbReference>
<dbReference type="FunFam" id="2.10.25.10:FF:000118">
    <property type="entry name" value="protein delta homolog 2"/>
    <property type="match status" value="2"/>
</dbReference>
<dbReference type="FunFam" id="2.10.25.10:FF:000334">
    <property type="entry name" value="protein delta homolog 2 isoform X1"/>
    <property type="match status" value="1"/>
</dbReference>
<dbReference type="Gene3D" id="2.10.25.10">
    <property type="entry name" value="Laminin"/>
    <property type="match status" value="5"/>
</dbReference>
<dbReference type="InterPro" id="IPR001881">
    <property type="entry name" value="EGF-like_Ca-bd_dom"/>
</dbReference>
<dbReference type="InterPro" id="IPR000742">
    <property type="entry name" value="EGF-like_dom"/>
</dbReference>
<dbReference type="InterPro" id="IPR000152">
    <property type="entry name" value="EGF-type_Asp/Asn_hydroxyl_site"/>
</dbReference>
<dbReference type="InterPro" id="IPR018097">
    <property type="entry name" value="EGF_Ca-bd_CS"/>
</dbReference>
<dbReference type="InterPro" id="IPR051022">
    <property type="entry name" value="Notch_Cell-Fate_Det"/>
</dbReference>
<dbReference type="PANTHER" id="PTHR24049">
    <property type="entry name" value="CRUMBS FAMILY MEMBER"/>
    <property type="match status" value="1"/>
</dbReference>
<dbReference type="PANTHER" id="PTHR24049:SF38">
    <property type="entry name" value="DELTA-LIKE PROTEIN"/>
    <property type="match status" value="1"/>
</dbReference>
<dbReference type="Pfam" id="PF00008">
    <property type="entry name" value="EGF"/>
    <property type="match status" value="4"/>
</dbReference>
<dbReference type="Pfam" id="PF21700">
    <property type="entry name" value="EGF_DL_JAG"/>
    <property type="match status" value="1"/>
</dbReference>
<dbReference type="PRINTS" id="PR00010">
    <property type="entry name" value="EGFBLOOD"/>
</dbReference>
<dbReference type="SMART" id="SM00181">
    <property type="entry name" value="EGF"/>
    <property type="match status" value="6"/>
</dbReference>
<dbReference type="SMART" id="SM00179">
    <property type="entry name" value="EGF_CA"/>
    <property type="match status" value="4"/>
</dbReference>
<dbReference type="SUPFAM" id="SSF57196">
    <property type="entry name" value="EGF/Laminin"/>
    <property type="match status" value="4"/>
</dbReference>
<dbReference type="PROSITE" id="PS00010">
    <property type="entry name" value="ASX_HYDROXYL"/>
    <property type="match status" value="2"/>
</dbReference>
<dbReference type="PROSITE" id="PS00022">
    <property type="entry name" value="EGF_1"/>
    <property type="match status" value="6"/>
</dbReference>
<dbReference type="PROSITE" id="PS01186">
    <property type="entry name" value="EGF_2"/>
    <property type="match status" value="6"/>
</dbReference>
<dbReference type="PROSITE" id="PS50026">
    <property type="entry name" value="EGF_3"/>
    <property type="match status" value="6"/>
</dbReference>
<dbReference type="PROSITE" id="PS01187">
    <property type="entry name" value="EGF_CA"/>
    <property type="match status" value="2"/>
</dbReference>
<name>DLK2_HUMAN</name>
<sequence length="383" mass="40548">MPSGCRCLHLVCLLCILGAPGQPVRADDCSSHCDLAHGCCAPDGSCRCDPGWEGLHCERCVRMPGCQHGTCHQPWQCICHSGWAGKFCDKDEHICTTQSPCQNGGQCMYDGGGEYHCVCLPGFHGRDCERKAGPCEQAGSPCRNGGQCQDDQGFALNFTCRCLVGFVGARCEVNVDDCLMRPCANGATCLDGINRFSCLCPEGFAGRFCTINLDDCASRPCQRGARCRDRVHDFDCLCPSGYGGKTCELVLPVPDPPTTVDTPLGPTSAVVVPATGPAPHSAGAGLLRISVKEVVRRQEAGLGEPSLVALVVFGALTAALVLATVLLTLRAWRRGVCPPGPCCYPAPHYAPACQDQECQVSMLPAGLPLPRDLPPEPGKTTAL</sequence>
<comment type="function">
    <text evidence="1">Regulates adipogenesis.</text>
</comment>
<comment type="subcellular location">
    <subcellularLocation>
        <location evidence="5">Membrane</location>
        <topology evidence="5">Single-pass type I membrane protein</topology>
    </subcellularLocation>
</comment>
<comment type="alternative products">
    <event type="alternative splicing"/>
    <isoform>
        <id>Q6UY11-1</id>
        <name>1</name>
        <sequence type="displayed"/>
    </isoform>
    <isoform>
        <id>Q6UY11-2</id>
        <name>2</name>
        <sequence type="described" ref="VSP_011767"/>
    </isoform>
</comment>
<comment type="miscellaneous">
    <molecule>Isoform 2</molecule>
    <text evidence="5">Splicing acceptor site not canonical.</text>
</comment>
<evidence type="ECO:0000250" key="1"/>
<evidence type="ECO:0000255" key="2"/>
<evidence type="ECO:0000255" key="3">
    <source>
        <dbReference type="PROSITE-ProRule" id="PRU00076"/>
    </source>
</evidence>
<evidence type="ECO:0000303" key="4">
    <source>
    </source>
</evidence>
<evidence type="ECO:0000305" key="5"/>
<proteinExistence type="evidence at protein level"/>
<organism>
    <name type="scientific">Homo sapiens</name>
    <name type="common">Human</name>
    <dbReference type="NCBI Taxonomy" id="9606"/>
    <lineage>
        <taxon>Eukaryota</taxon>
        <taxon>Metazoa</taxon>
        <taxon>Chordata</taxon>
        <taxon>Craniata</taxon>
        <taxon>Vertebrata</taxon>
        <taxon>Euteleostomi</taxon>
        <taxon>Mammalia</taxon>
        <taxon>Eutheria</taxon>
        <taxon>Euarchontoglires</taxon>
        <taxon>Primates</taxon>
        <taxon>Haplorrhini</taxon>
        <taxon>Catarrhini</taxon>
        <taxon>Hominidae</taxon>
        <taxon>Homo</taxon>
    </lineage>
</organism>
<feature type="signal peptide" evidence="2">
    <location>
        <begin position="1"/>
        <end position="26"/>
    </location>
</feature>
<feature type="chain" id="PRO_0000007534" description="Protein delta homolog 2">
    <location>
        <begin position="27"/>
        <end position="383"/>
    </location>
</feature>
<feature type="topological domain" description="Extracellular" evidence="2">
    <location>
        <begin position="27"/>
        <end position="306"/>
    </location>
</feature>
<feature type="transmembrane region" description="Helical" evidence="2">
    <location>
        <begin position="307"/>
        <end position="327"/>
    </location>
</feature>
<feature type="topological domain" description="Cytoplasmic" evidence="2">
    <location>
        <begin position="328"/>
        <end position="383"/>
    </location>
</feature>
<feature type="domain" description="EGF-like 1" evidence="3">
    <location>
        <begin position="27"/>
        <end position="58"/>
    </location>
</feature>
<feature type="domain" description="EGF-like 2" evidence="3">
    <location>
        <begin position="62"/>
        <end position="89"/>
    </location>
</feature>
<feature type="domain" description="EGF-like 3" evidence="3">
    <location>
        <begin position="91"/>
        <end position="129"/>
    </location>
</feature>
<feature type="domain" description="EGF-like 4" evidence="3">
    <location>
        <begin position="131"/>
        <end position="172"/>
    </location>
</feature>
<feature type="domain" description="EGF-like 5; calcium-binding" evidence="3">
    <location>
        <begin position="174"/>
        <end position="210"/>
    </location>
</feature>
<feature type="domain" description="EGF-like 6; calcium-binding" evidence="3">
    <location>
        <begin position="212"/>
        <end position="248"/>
    </location>
</feature>
<feature type="glycosylation site" description="N-linked (GlcNAc...) asparagine" evidence="2">
    <location>
        <position position="157"/>
    </location>
</feature>
<feature type="disulfide bond" evidence="3">
    <location>
        <begin position="29"/>
        <end position="40"/>
    </location>
</feature>
<feature type="disulfide bond" evidence="3">
    <location>
        <begin position="33"/>
        <end position="46"/>
    </location>
</feature>
<feature type="disulfide bond" evidence="3">
    <location>
        <begin position="48"/>
        <end position="57"/>
    </location>
</feature>
<feature type="disulfide bond" evidence="3">
    <location>
        <begin position="66"/>
        <end position="71"/>
    </location>
</feature>
<feature type="disulfide bond" evidence="3">
    <location>
        <begin position="79"/>
        <end position="88"/>
    </location>
</feature>
<feature type="disulfide bond" evidence="3">
    <location>
        <begin position="95"/>
        <end position="107"/>
    </location>
</feature>
<feature type="disulfide bond" evidence="3">
    <location>
        <begin position="101"/>
        <end position="117"/>
    </location>
</feature>
<feature type="disulfide bond" evidence="3">
    <location>
        <begin position="119"/>
        <end position="128"/>
    </location>
</feature>
<feature type="disulfide bond" evidence="3">
    <location>
        <begin position="135"/>
        <end position="148"/>
    </location>
</feature>
<feature type="disulfide bond" evidence="3">
    <location>
        <begin position="142"/>
        <end position="160"/>
    </location>
</feature>
<feature type="disulfide bond" evidence="3">
    <location>
        <begin position="162"/>
        <end position="171"/>
    </location>
</feature>
<feature type="disulfide bond" evidence="3">
    <location>
        <begin position="178"/>
        <end position="189"/>
    </location>
</feature>
<feature type="disulfide bond" evidence="3">
    <location>
        <begin position="183"/>
        <end position="198"/>
    </location>
</feature>
<feature type="disulfide bond" evidence="3">
    <location>
        <begin position="200"/>
        <end position="209"/>
    </location>
</feature>
<feature type="disulfide bond" evidence="3">
    <location>
        <begin position="216"/>
        <end position="227"/>
    </location>
</feature>
<feature type="disulfide bond" evidence="3">
    <location>
        <begin position="221"/>
        <end position="236"/>
    </location>
</feature>
<feature type="disulfide bond" evidence="3">
    <location>
        <begin position="238"/>
        <end position="247"/>
    </location>
</feature>
<feature type="splice variant" id="VSP_011767" description="In isoform 2." evidence="4">
    <location>
        <begin position="1"/>
        <end position="179"/>
    </location>
</feature>
<feature type="sequence variant" id="VAR_048977" description="In dbSNP:rs35192247.">
    <original>G</original>
    <variation>R</variation>
    <location>
        <position position="301"/>
    </location>
</feature>